<feature type="chain" id="PRO_0000143744" description="Maturase K">
    <location>
        <begin position="1"/>
        <end position="506"/>
    </location>
</feature>
<organism>
    <name type="scientific">Trifolium fragiferum</name>
    <name type="common">Strawberry clover</name>
    <dbReference type="NCBI Taxonomy" id="97023"/>
    <lineage>
        <taxon>Eukaryota</taxon>
        <taxon>Viridiplantae</taxon>
        <taxon>Streptophyta</taxon>
        <taxon>Embryophyta</taxon>
        <taxon>Tracheophyta</taxon>
        <taxon>Spermatophyta</taxon>
        <taxon>Magnoliopsida</taxon>
        <taxon>eudicotyledons</taxon>
        <taxon>Gunneridae</taxon>
        <taxon>Pentapetalae</taxon>
        <taxon>rosids</taxon>
        <taxon>fabids</taxon>
        <taxon>Fabales</taxon>
        <taxon>Fabaceae</taxon>
        <taxon>Papilionoideae</taxon>
        <taxon>50 kb inversion clade</taxon>
        <taxon>NPAAA clade</taxon>
        <taxon>Hologalegina</taxon>
        <taxon>IRL clade</taxon>
        <taxon>Trifolieae</taxon>
        <taxon>Trifolium</taxon>
    </lineage>
</organism>
<protein>
    <recommendedName>
        <fullName evidence="1">Maturase K</fullName>
    </recommendedName>
    <alternativeName>
        <fullName evidence="1">Intron maturase</fullName>
    </alternativeName>
</protein>
<proteinExistence type="inferred from homology"/>
<comment type="function">
    <text evidence="1">Usually encoded in the trnK tRNA gene intron. Probably assists in splicing its own and other chloroplast group II introns.</text>
</comment>
<comment type="subcellular location">
    <subcellularLocation>
        <location>Plastid</location>
        <location>Chloroplast</location>
    </subcellularLocation>
</comment>
<comment type="similarity">
    <text evidence="1">Belongs to the intron maturase 2 family. MatK subfamily.</text>
</comment>
<dbReference type="EMBL" id="AF522122">
    <property type="protein sequence ID" value="AAM82114.1"/>
    <property type="molecule type" value="Genomic_DNA"/>
</dbReference>
<dbReference type="GO" id="GO:0009507">
    <property type="term" value="C:chloroplast"/>
    <property type="evidence" value="ECO:0007669"/>
    <property type="project" value="UniProtKB-SubCell"/>
</dbReference>
<dbReference type="GO" id="GO:0003723">
    <property type="term" value="F:RNA binding"/>
    <property type="evidence" value="ECO:0007669"/>
    <property type="project" value="UniProtKB-KW"/>
</dbReference>
<dbReference type="GO" id="GO:0006397">
    <property type="term" value="P:mRNA processing"/>
    <property type="evidence" value="ECO:0007669"/>
    <property type="project" value="UniProtKB-KW"/>
</dbReference>
<dbReference type="GO" id="GO:0008380">
    <property type="term" value="P:RNA splicing"/>
    <property type="evidence" value="ECO:0007669"/>
    <property type="project" value="UniProtKB-UniRule"/>
</dbReference>
<dbReference type="GO" id="GO:0008033">
    <property type="term" value="P:tRNA processing"/>
    <property type="evidence" value="ECO:0007669"/>
    <property type="project" value="UniProtKB-KW"/>
</dbReference>
<dbReference type="HAMAP" id="MF_01390">
    <property type="entry name" value="MatK"/>
    <property type="match status" value="1"/>
</dbReference>
<dbReference type="InterPro" id="IPR024937">
    <property type="entry name" value="Domain_X"/>
</dbReference>
<dbReference type="InterPro" id="IPR002866">
    <property type="entry name" value="Maturase_MatK"/>
</dbReference>
<dbReference type="InterPro" id="IPR024942">
    <property type="entry name" value="Maturase_MatK_N"/>
</dbReference>
<dbReference type="PANTHER" id="PTHR34811">
    <property type="entry name" value="MATURASE K"/>
    <property type="match status" value="1"/>
</dbReference>
<dbReference type="PANTHER" id="PTHR34811:SF1">
    <property type="entry name" value="MATURASE K"/>
    <property type="match status" value="1"/>
</dbReference>
<dbReference type="Pfam" id="PF01348">
    <property type="entry name" value="Intron_maturas2"/>
    <property type="match status" value="1"/>
</dbReference>
<dbReference type="Pfam" id="PF01824">
    <property type="entry name" value="MatK_N"/>
    <property type="match status" value="1"/>
</dbReference>
<accession>Q8MCN3</accession>
<geneLocation type="chloroplast"/>
<reference key="1">
    <citation type="book" date="2003" name="Advances in legume systematics - part 10">
        <title>Phylogenetic analyses of tribes Trifolieae and Vicieae based on sequences of the plastid gene matK (Papilionoideae: Leguminosae).</title>
        <editorList>
            <person name="Klitgaard B.B."/>
            <person name="Bruneau A."/>
        </editorList>
        <authorList>
            <person name="Steele K.P."/>
            <person name="Wojciechowski M.F."/>
        </authorList>
    </citation>
    <scope>NUCLEOTIDE SEQUENCE [GENOMIC DNA]</scope>
</reference>
<gene>
    <name evidence="1" type="primary">matK</name>
</gene>
<evidence type="ECO:0000255" key="1">
    <source>
        <dbReference type="HAMAP-Rule" id="MF_01390"/>
    </source>
</evidence>
<name>MATK_TRIFR</name>
<keyword id="KW-0150">Chloroplast</keyword>
<keyword id="KW-0507">mRNA processing</keyword>
<keyword id="KW-0934">Plastid</keyword>
<keyword id="KW-0694">RNA-binding</keyword>
<keyword id="KW-0819">tRNA processing</keyword>
<sequence>MKEYRVYLERARSRQQDFLYPLIFREYIYGLAYSHNFNRSIFVENGGYDNKYSLLNVKRLITRMYQQNHLIISTNDSNKNPFLVYNKNFYSQIISEGFAIVVEIPFFLQLSSSLEEAEIIKSYKNVRSIHSIFPFLEDKFTYLNYVSDIRIPYPIHLEILVQILRYWVKDVPFFHLLRXFLYDFCNWNCFTSTKKSISTFSKSNPRLFLFLYNFYVCEYESIFLFLRNKSSHLRLKSFSVFFERIFFYAKRKHLVEVFSKDFSYTLPFFKDPNIHYVRYQGKCILASKNVPFLMNKWKHYFIHLWQCFFDVWSQPRTIDINQLSEHSFQLLGYFSNVRLNRSVVRSQMLENTFLIEIVSKKLDIIVPIIPLIRSLAKAKFCNVLGHPISKPVWADSSDFDIIERFLRICRNLSHYYNGSSKKKSLYRIKYILRLSCIKTLACKHKSTVRAFLKRSGSEELLEEFFTEEEEILSLIFPRDSFTLHRFHRNRIWYLDILFSNDLVNDE</sequence>